<gene>
    <name type="ordered locus">WS0737</name>
</gene>
<proteinExistence type="inferred from homology"/>
<sequence>MPTLKELIAKLPKAELHLHIEGSLEPELMFELAQKNRIPLPYKSVEEVRKAYSFTSLQSFLDIYYAGAKVLLTESDFFDLAWAYLLRCKAQNICHTEIFFDPQTHTSRGVSFETVIEGITKALEKGEKELGISSFLIMCFLRHLSESEGFEILKSSLPFREKILGVGLDSSEVGHPPSKFERLFLECRKAGYKIVAHAGEEGDSSYIWEAIHKLQVERIDHGIRCEEDENLVEWLIQKQTPLTVCPLSNVKLQAVKNLSEHNILRLLRKGVLVTVNSDDPAYFGGYLNENYEALSEHLNASKEELKALAINSFKASFLSEEKKMDWIKQII</sequence>
<reference key="1">
    <citation type="journal article" date="2003" name="Proc. Natl. Acad. Sci. U.S.A.">
        <title>Complete genome sequence and analysis of Wolinella succinogenes.</title>
        <authorList>
            <person name="Baar C."/>
            <person name="Eppinger M."/>
            <person name="Raddatz G."/>
            <person name="Simon J."/>
            <person name="Lanz C."/>
            <person name="Klimmek O."/>
            <person name="Nandakumar R."/>
            <person name="Gross R."/>
            <person name="Rosinus A."/>
            <person name="Keller H."/>
            <person name="Jagtap P."/>
            <person name="Linke B."/>
            <person name="Meyer F."/>
            <person name="Lederer H."/>
            <person name="Schuster S.C."/>
        </authorList>
    </citation>
    <scope>NUCLEOTIDE SEQUENCE [LARGE SCALE GENOMIC DNA]</scope>
    <source>
        <strain>ATCC 29543 / DSM 1740 / CCUG 13145 / JCM 31913 / LMG 7466 / NCTC 11488 / FDC 602W</strain>
    </source>
</reference>
<dbReference type="EC" id="3.5.4.2" evidence="1"/>
<dbReference type="EMBL" id="BX571659">
    <property type="protein sequence ID" value="CAE09856.1"/>
    <property type="molecule type" value="Genomic_DNA"/>
</dbReference>
<dbReference type="RefSeq" id="WP_011138654.1">
    <property type="nucleotide sequence ID" value="NC_005090.1"/>
</dbReference>
<dbReference type="SMR" id="Q7M9R5"/>
<dbReference type="STRING" id="273121.WS0737"/>
<dbReference type="KEGG" id="wsu:WS0737"/>
<dbReference type="eggNOG" id="COG1816">
    <property type="taxonomic scope" value="Bacteria"/>
</dbReference>
<dbReference type="HOGENOM" id="CLU_039228_7_0_7"/>
<dbReference type="Proteomes" id="UP000000422">
    <property type="component" value="Chromosome"/>
</dbReference>
<dbReference type="GO" id="GO:0005829">
    <property type="term" value="C:cytosol"/>
    <property type="evidence" value="ECO:0007669"/>
    <property type="project" value="TreeGrafter"/>
</dbReference>
<dbReference type="GO" id="GO:0000034">
    <property type="term" value="F:adenine deaminase activity"/>
    <property type="evidence" value="ECO:0007669"/>
    <property type="project" value="UniProtKB-UniRule"/>
</dbReference>
<dbReference type="GO" id="GO:0008270">
    <property type="term" value="F:zinc ion binding"/>
    <property type="evidence" value="ECO:0007669"/>
    <property type="project" value="UniProtKB-UniRule"/>
</dbReference>
<dbReference type="GO" id="GO:0006146">
    <property type="term" value="P:adenine catabolic process"/>
    <property type="evidence" value="ECO:0007669"/>
    <property type="project" value="UniProtKB-UniRule"/>
</dbReference>
<dbReference type="GO" id="GO:0043103">
    <property type="term" value="P:hypoxanthine salvage"/>
    <property type="evidence" value="ECO:0007669"/>
    <property type="project" value="UniProtKB-UniRule"/>
</dbReference>
<dbReference type="GO" id="GO:0009117">
    <property type="term" value="P:nucleotide metabolic process"/>
    <property type="evidence" value="ECO:0007669"/>
    <property type="project" value="UniProtKB-KW"/>
</dbReference>
<dbReference type="CDD" id="cd01320">
    <property type="entry name" value="ADA"/>
    <property type="match status" value="1"/>
</dbReference>
<dbReference type="FunFam" id="3.20.20.140:FF:000039">
    <property type="entry name" value="Adenine deaminase"/>
    <property type="match status" value="1"/>
</dbReference>
<dbReference type="Gene3D" id="3.20.20.140">
    <property type="entry name" value="Metal-dependent hydrolases"/>
    <property type="match status" value="1"/>
</dbReference>
<dbReference type="HAMAP" id="MF_01962">
    <property type="entry name" value="Adenine_deaminase"/>
    <property type="match status" value="1"/>
</dbReference>
<dbReference type="InterPro" id="IPR001365">
    <property type="entry name" value="A_deaminase_dom"/>
</dbReference>
<dbReference type="InterPro" id="IPR028892">
    <property type="entry name" value="ADE"/>
</dbReference>
<dbReference type="InterPro" id="IPR006330">
    <property type="entry name" value="Ado/ade_deaminase"/>
</dbReference>
<dbReference type="InterPro" id="IPR032466">
    <property type="entry name" value="Metal_Hydrolase"/>
</dbReference>
<dbReference type="NCBIfam" id="TIGR01430">
    <property type="entry name" value="aden_deam"/>
    <property type="match status" value="1"/>
</dbReference>
<dbReference type="NCBIfam" id="NF006850">
    <property type="entry name" value="PRK09358.1-6"/>
    <property type="match status" value="1"/>
</dbReference>
<dbReference type="PANTHER" id="PTHR43114">
    <property type="entry name" value="ADENINE DEAMINASE"/>
    <property type="match status" value="1"/>
</dbReference>
<dbReference type="PANTHER" id="PTHR43114:SF6">
    <property type="entry name" value="ADENINE DEAMINASE"/>
    <property type="match status" value="1"/>
</dbReference>
<dbReference type="Pfam" id="PF00962">
    <property type="entry name" value="A_deaminase"/>
    <property type="match status" value="1"/>
</dbReference>
<dbReference type="SUPFAM" id="SSF51556">
    <property type="entry name" value="Metallo-dependent hydrolases"/>
    <property type="match status" value="1"/>
</dbReference>
<comment type="function">
    <text evidence="1">Catalyzes the hydrolytic deamination of adenine to hypoxanthine. Plays an important role in the purine salvage pathway and in nitrogen catabolism.</text>
</comment>
<comment type="catalytic activity">
    <reaction evidence="1">
        <text>adenine + H2O + H(+) = hypoxanthine + NH4(+)</text>
        <dbReference type="Rhea" id="RHEA:23688"/>
        <dbReference type="ChEBI" id="CHEBI:15377"/>
        <dbReference type="ChEBI" id="CHEBI:15378"/>
        <dbReference type="ChEBI" id="CHEBI:16708"/>
        <dbReference type="ChEBI" id="CHEBI:17368"/>
        <dbReference type="ChEBI" id="CHEBI:28938"/>
        <dbReference type="EC" id="3.5.4.2"/>
    </reaction>
</comment>
<comment type="cofactor">
    <cofactor evidence="1">
        <name>Zn(2+)</name>
        <dbReference type="ChEBI" id="CHEBI:29105"/>
    </cofactor>
    <text evidence="1">Binds 1 zinc ion per subunit.</text>
</comment>
<comment type="similarity">
    <text evidence="1">Belongs to the metallo-dependent hydrolases superfamily. Adenosine and AMP deaminases family. Adenine deaminase type 2 subfamily.</text>
</comment>
<evidence type="ECO:0000255" key="1">
    <source>
        <dbReference type="HAMAP-Rule" id="MF_01962"/>
    </source>
</evidence>
<feature type="chain" id="PRO_0000194402" description="Adenine deaminase">
    <location>
        <begin position="1"/>
        <end position="331"/>
    </location>
</feature>
<feature type="active site" description="Proton donor" evidence="1">
    <location>
        <position position="200"/>
    </location>
</feature>
<feature type="binding site" evidence="1">
    <location>
        <position position="17"/>
    </location>
    <ligand>
        <name>Zn(2+)</name>
        <dbReference type="ChEBI" id="CHEBI:29105"/>
        <note>catalytic</note>
    </ligand>
</feature>
<feature type="binding site" evidence="1">
    <location>
        <position position="19"/>
    </location>
    <ligand>
        <name>Zn(2+)</name>
        <dbReference type="ChEBI" id="CHEBI:29105"/>
        <note>catalytic</note>
    </ligand>
</feature>
<feature type="binding site" evidence="1">
    <location>
        <position position="197"/>
    </location>
    <ligand>
        <name>Zn(2+)</name>
        <dbReference type="ChEBI" id="CHEBI:29105"/>
        <note>catalytic</note>
    </ligand>
</feature>
<feature type="binding site" evidence="1">
    <location>
        <position position="278"/>
    </location>
    <ligand>
        <name>Zn(2+)</name>
        <dbReference type="ChEBI" id="CHEBI:29105"/>
        <note>catalytic</note>
    </ligand>
</feature>
<feature type="binding site" evidence="1">
    <location>
        <position position="279"/>
    </location>
    <ligand>
        <name>substrate</name>
    </ligand>
</feature>
<feature type="site" description="Important for catalytic activity" evidence="1">
    <location>
        <position position="221"/>
    </location>
</feature>
<organism>
    <name type="scientific">Wolinella succinogenes (strain ATCC 29543 / DSM 1740 / CCUG 13145 / JCM 31913 / LMG 7466 / NCTC 11488 / FDC 602W)</name>
    <name type="common">Vibrio succinogenes</name>
    <dbReference type="NCBI Taxonomy" id="273121"/>
    <lineage>
        <taxon>Bacteria</taxon>
        <taxon>Pseudomonadati</taxon>
        <taxon>Campylobacterota</taxon>
        <taxon>Epsilonproteobacteria</taxon>
        <taxon>Campylobacterales</taxon>
        <taxon>Helicobacteraceae</taxon>
        <taxon>Wolinella</taxon>
    </lineage>
</organism>
<keyword id="KW-0378">Hydrolase</keyword>
<keyword id="KW-0479">Metal-binding</keyword>
<keyword id="KW-0546">Nucleotide metabolism</keyword>
<keyword id="KW-1185">Reference proteome</keyword>
<keyword id="KW-0862">Zinc</keyword>
<accession>Q7M9R5</accession>
<name>ADE_WOLSU</name>
<protein>
    <recommendedName>
        <fullName evidence="1">Adenine deaminase</fullName>
        <shortName evidence="1">ADE</shortName>
        <ecNumber evidence="1">3.5.4.2</ecNumber>
    </recommendedName>
    <alternativeName>
        <fullName evidence="1">Adenine aminohydrolase</fullName>
        <shortName evidence="1">AAH</shortName>
    </alternativeName>
</protein>